<accession>A8H1H4</accession>
<proteinExistence type="inferred from homology"/>
<gene>
    <name evidence="1" type="primary">lspA</name>
    <name type="ordered locus">Spea_1084</name>
</gene>
<reference key="1">
    <citation type="submission" date="2007-10" db="EMBL/GenBank/DDBJ databases">
        <title>Complete sequence of Shewanella pealeana ATCC 700345.</title>
        <authorList>
            <consortium name="US DOE Joint Genome Institute"/>
            <person name="Copeland A."/>
            <person name="Lucas S."/>
            <person name="Lapidus A."/>
            <person name="Barry K."/>
            <person name="Glavina del Rio T."/>
            <person name="Dalin E."/>
            <person name="Tice H."/>
            <person name="Pitluck S."/>
            <person name="Chertkov O."/>
            <person name="Brettin T."/>
            <person name="Bruce D."/>
            <person name="Detter J.C."/>
            <person name="Han C."/>
            <person name="Schmutz J."/>
            <person name="Larimer F."/>
            <person name="Land M."/>
            <person name="Hauser L."/>
            <person name="Kyrpides N."/>
            <person name="Kim E."/>
            <person name="Zhao J.-S.Z."/>
            <person name="Manno D."/>
            <person name="Hawari J."/>
            <person name="Richardson P."/>
        </authorList>
    </citation>
    <scope>NUCLEOTIDE SEQUENCE [LARGE SCALE GENOMIC DNA]</scope>
    <source>
        <strain>ATCC 700345 / ANG-SQ1</strain>
    </source>
</reference>
<keyword id="KW-0064">Aspartyl protease</keyword>
<keyword id="KW-0997">Cell inner membrane</keyword>
<keyword id="KW-1003">Cell membrane</keyword>
<keyword id="KW-0378">Hydrolase</keyword>
<keyword id="KW-0472">Membrane</keyword>
<keyword id="KW-0645">Protease</keyword>
<keyword id="KW-1185">Reference proteome</keyword>
<keyword id="KW-0812">Transmembrane</keyword>
<keyword id="KW-1133">Transmembrane helix</keyword>
<dbReference type="EC" id="3.4.23.36" evidence="1"/>
<dbReference type="EMBL" id="CP000851">
    <property type="protein sequence ID" value="ABV86411.1"/>
    <property type="molecule type" value="Genomic_DNA"/>
</dbReference>
<dbReference type="RefSeq" id="WP_012154342.1">
    <property type="nucleotide sequence ID" value="NC_009901.1"/>
</dbReference>
<dbReference type="SMR" id="A8H1H4"/>
<dbReference type="STRING" id="398579.Spea_1084"/>
<dbReference type="MEROPS" id="A08.001"/>
<dbReference type="KEGG" id="spl:Spea_1084"/>
<dbReference type="eggNOG" id="COG0597">
    <property type="taxonomic scope" value="Bacteria"/>
</dbReference>
<dbReference type="HOGENOM" id="CLU_083252_4_0_6"/>
<dbReference type="OrthoDB" id="9810259at2"/>
<dbReference type="UniPathway" id="UPA00665"/>
<dbReference type="Proteomes" id="UP000002608">
    <property type="component" value="Chromosome"/>
</dbReference>
<dbReference type="GO" id="GO:0005886">
    <property type="term" value="C:plasma membrane"/>
    <property type="evidence" value="ECO:0007669"/>
    <property type="project" value="UniProtKB-SubCell"/>
</dbReference>
<dbReference type="GO" id="GO:0004190">
    <property type="term" value="F:aspartic-type endopeptidase activity"/>
    <property type="evidence" value="ECO:0007669"/>
    <property type="project" value="UniProtKB-UniRule"/>
</dbReference>
<dbReference type="GO" id="GO:0006508">
    <property type="term" value="P:proteolysis"/>
    <property type="evidence" value="ECO:0007669"/>
    <property type="project" value="UniProtKB-KW"/>
</dbReference>
<dbReference type="HAMAP" id="MF_00161">
    <property type="entry name" value="LspA"/>
    <property type="match status" value="1"/>
</dbReference>
<dbReference type="InterPro" id="IPR001872">
    <property type="entry name" value="Peptidase_A8"/>
</dbReference>
<dbReference type="NCBIfam" id="TIGR00077">
    <property type="entry name" value="lspA"/>
    <property type="match status" value="1"/>
</dbReference>
<dbReference type="PANTHER" id="PTHR33695">
    <property type="entry name" value="LIPOPROTEIN SIGNAL PEPTIDASE"/>
    <property type="match status" value="1"/>
</dbReference>
<dbReference type="PANTHER" id="PTHR33695:SF1">
    <property type="entry name" value="LIPOPROTEIN SIGNAL PEPTIDASE"/>
    <property type="match status" value="1"/>
</dbReference>
<dbReference type="Pfam" id="PF01252">
    <property type="entry name" value="Peptidase_A8"/>
    <property type="match status" value="1"/>
</dbReference>
<dbReference type="PRINTS" id="PR00781">
    <property type="entry name" value="LIPOSIGPTASE"/>
</dbReference>
<dbReference type="PROSITE" id="PS00855">
    <property type="entry name" value="SPASE_II"/>
    <property type="match status" value="1"/>
</dbReference>
<evidence type="ECO:0000255" key="1">
    <source>
        <dbReference type="HAMAP-Rule" id="MF_00161"/>
    </source>
</evidence>
<feature type="chain" id="PRO_1000076932" description="Lipoprotein signal peptidase">
    <location>
        <begin position="1"/>
        <end position="170"/>
    </location>
</feature>
<feature type="transmembrane region" description="Helical" evidence="1">
    <location>
        <begin position="12"/>
        <end position="32"/>
    </location>
</feature>
<feature type="transmembrane region" description="Helical" evidence="1">
    <location>
        <begin position="67"/>
        <end position="87"/>
    </location>
</feature>
<feature type="transmembrane region" description="Helical" evidence="1">
    <location>
        <begin position="94"/>
        <end position="113"/>
    </location>
</feature>
<feature type="transmembrane region" description="Helical" evidence="1">
    <location>
        <begin position="139"/>
        <end position="159"/>
    </location>
</feature>
<feature type="active site" evidence="1">
    <location>
        <position position="123"/>
    </location>
</feature>
<feature type="active site" evidence="1">
    <location>
        <position position="141"/>
    </location>
</feature>
<organism>
    <name type="scientific">Shewanella pealeana (strain ATCC 700345 / ANG-SQ1)</name>
    <dbReference type="NCBI Taxonomy" id="398579"/>
    <lineage>
        <taxon>Bacteria</taxon>
        <taxon>Pseudomonadati</taxon>
        <taxon>Pseudomonadota</taxon>
        <taxon>Gammaproteobacteria</taxon>
        <taxon>Alteromonadales</taxon>
        <taxon>Shewanellaceae</taxon>
        <taxon>Shewanella</taxon>
    </lineage>
</organism>
<name>LSPA_SHEPA</name>
<protein>
    <recommendedName>
        <fullName evidence="1">Lipoprotein signal peptidase</fullName>
        <ecNumber evidence="1">3.4.23.36</ecNumber>
    </recommendedName>
    <alternativeName>
        <fullName evidence="1">Prolipoprotein signal peptidase</fullName>
    </alternativeName>
    <alternativeName>
        <fullName evidence="1">Signal peptidase II</fullName>
        <shortName evidence="1">SPase II</shortName>
    </alternativeName>
</protein>
<sequence length="170" mass="19421">MPTNWKDSGLRWYWVVVLVFLADQLSKQWVLSNFDLYESIQLLPVFNFTYVRNYGAAFSFLSDAGGWQRWLFTFVAVGFSVLLSVWLRQQPSKMWRLNLAYTLVIGGALGNLIDRLQHGYVVDFLDFYWNTSHFPAFNIADSAICVGAGLIILDSFVAGKDDKKSDGIKE</sequence>
<comment type="function">
    <text evidence="1">This protein specifically catalyzes the removal of signal peptides from prolipoproteins.</text>
</comment>
<comment type="catalytic activity">
    <reaction evidence="1">
        <text>Release of signal peptides from bacterial membrane prolipoproteins. Hydrolyzes -Xaa-Yaa-Zaa-|-(S,diacylglyceryl)Cys-, in which Xaa is hydrophobic (preferably Leu), and Yaa (Ala or Ser) and Zaa (Gly or Ala) have small, neutral side chains.</text>
        <dbReference type="EC" id="3.4.23.36"/>
    </reaction>
</comment>
<comment type="pathway">
    <text evidence="1">Protein modification; lipoprotein biosynthesis (signal peptide cleavage).</text>
</comment>
<comment type="subcellular location">
    <subcellularLocation>
        <location evidence="1">Cell inner membrane</location>
        <topology evidence="1">Multi-pass membrane protein</topology>
    </subcellularLocation>
</comment>
<comment type="similarity">
    <text evidence="1">Belongs to the peptidase A8 family.</text>
</comment>